<keyword id="KW-0325">Glycoprotein</keyword>
<keyword id="KW-1185">Reference proteome</keyword>
<keyword id="KW-0964">Secreted</keyword>
<keyword id="KW-0732">Signal</keyword>
<comment type="subcellular location">
    <subcellularLocation>
        <location evidence="2">Secreted</location>
    </subcellularLocation>
</comment>
<comment type="similarity">
    <text evidence="2">Belongs to the NXPE family.</text>
</comment>
<sequence>MKMMASRKSLWVLLFIVIFWISFTVFRNPVKLWAVFKLPASFNQWDLIMKSSCPKVPLNPSVSPTETELRIREILEKLNKQIPPRPFAHLNNTTSATHSIATILNPQDTYCVGDQLDILVEARDHLRNRKGYGGDFLRARMSSPALKAGASGKVTDFNNGTYLVSFTLFWEGQVSLSILLMHPSEGVSALWRARNQGYDRIIFSGHFVSGASQVHTDCALVLNSSVELCQYLDAQDQEAFYCVKPPNVPCAAITHMHSKNKDISYLSQQERSLFERSNIAVEIMGKSNVISVSKCNKAVPVKKKCKFGMASAIPTGHVWKNTWNPASCSLAPIKMKDCLRGKLVHLMGDSTMRQWMEYFKSKINTLRPVDLHETGRLQHQLAVDLDEKINIQWQKHGFPLIGSLVYSVKEIENTARIIDRIGGEKNTVIVFSLGQHFRPFPIDVFIRRALSVHRALQRLLLRSPDTLVVLKTENTRELNNDMERFSDFHGYTQYLALKNIFQDLRVGVIDAWDMTVAYGTNDVHPPEEVVRSEINIFLNYIC</sequence>
<name>NXPE4_RAT</name>
<proteinExistence type="evidence at transcript level"/>
<evidence type="ECO:0000255" key="1"/>
<evidence type="ECO:0000305" key="2"/>
<gene>
    <name type="primary">Nxpe4</name>
    <name type="synonym">Fam55d</name>
</gene>
<organism>
    <name type="scientific">Rattus norvegicus</name>
    <name type="common">Rat</name>
    <dbReference type="NCBI Taxonomy" id="10116"/>
    <lineage>
        <taxon>Eukaryota</taxon>
        <taxon>Metazoa</taxon>
        <taxon>Chordata</taxon>
        <taxon>Craniata</taxon>
        <taxon>Vertebrata</taxon>
        <taxon>Euteleostomi</taxon>
        <taxon>Mammalia</taxon>
        <taxon>Eutheria</taxon>
        <taxon>Euarchontoglires</taxon>
        <taxon>Glires</taxon>
        <taxon>Rodentia</taxon>
        <taxon>Myomorpha</taxon>
        <taxon>Muroidea</taxon>
        <taxon>Muridae</taxon>
        <taxon>Murinae</taxon>
        <taxon>Rattus</taxon>
    </lineage>
</organism>
<reference key="1">
    <citation type="journal article" date="2004" name="Genome Res.">
        <title>The status, quality, and expansion of the NIH full-length cDNA project: the Mammalian Gene Collection (MGC).</title>
        <authorList>
            <consortium name="The MGC Project Team"/>
        </authorList>
    </citation>
    <scope>NUCLEOTIDE SEQUENCE [LARGE SCALE MRNA]</scope>
    <source>
        <tissue>Kidney</tissue>
    </source>
</reference>
<protein>
    <recommendedName>
        <fullName>NXPE family member 4</fullName>
    </recommendedName>
    <alternativeName>
        <fullName>Protein FAM55D</fullName>
    </alternativeName>
</protein>
<dbReference type="EMBL" id="BC083798">
    <property type="protein sequence ID" value="AAH83798.1"/>
    <property type="molecule type" value="mRNA"/>
</dbReference>
<dbReference type="RefSeq" id="NP_001020226.1">
    <property type="nucleotide sequence ID" value="NM_001025055.1"/>
</dbReference>
<dbReference type="RefSeq" id="XP_038937875.1">
    <property type="nucleotide sequence ID" value="XM_039081947.2"/>
</dbReference>
<dbReference type="RefSeq" id="XP_038937876.1">
    <property type="nucleotide sequence ID" value="XM_039081948.2"/>
</dbReference>
<dbReference type="RefSeq" id="XP_038937878.1">
    <property type="nucleotide sequence ID" value="XM_039081950.2"/>
</dbReference>
<dbReference type="RefSeq" id="XP_038937879.1">
    <property type="nucleotide sequence ID" value="XM_039081951.2"/>
</dbReference>
<dbReference type="RefSeq" id="XP_038937880.1">
    <property type="nucleotide sequence ID" value="XM_039081952.2"/>
</dbReference>
<dbReference type="RefSeq" id="XP_038937881.1">
    <property type="nucleotide sequence ID" value="XM_039081953.2"/>
</dbReference>
<dbReference type="RefSeq" id="XP_063122047.1">
    <property type="nucleotide sequence ID" value="XM_063265977.1"/>
</dbReference>
<dbReference type="RefSeq" id="XP_063122048.1">
    <property type="nucleotide sequence ID" value="XM_063265978.1"/>
</dbReference>
<dbReference type="RefSeq" id="XP_063122050.1">
    <property type="nucleotide sequence ID" value="XM_063265980.1"/>
</dbReference>
<dbReference type="RefSeq" id="XP_063122051.1">
    <property type="nucleotide sequence ID" value="XM_063265981.1"/>
</dbReference>
<dbReference type="RefSeq" id="XP_063122052.1">
    <property type="nucleotide sequence ID" value="XM_063265982.1"/>
</dbReference>
<dbReference type="RefSeq" id="XP_063122053.1">
    <property type="nucleotide sequence ID" value="XM_063265983.1"/>
</dbReference>
<dbReference type="RefSeq" id="XP_063122054.1">
    <property type="nucleotide sequence ID" value="XM_063265984.1"/>
</dbReference>
<dbReference type="FunCoup" id="Q5XI89">
    <property type="interactions" value="5"/>
</dbReference>
<dbReference type="IntAct" id="Q5XI89">
    <property type="interactions" value="1"/>
</dbReference>
<dbReference type="GlyCosmos" id="Q5XI89">
    <property type="glycosylation" value="4 sites, No reported glycans"/>
</dbReference>
<dbReference type="GlyGen" id="Q5XI89">
    <property type="glycosylation" value="4 sites"/>
</dbReference>
<dbReference type="iPTMnet" id="Q5XI89"/>
<dbReference type="PhosphoSitePlus" id="Q5XI89"/>
<dbReference type="Ensembl" id="ENSRNOT00000093967.1">
    <property type="protein sequence ID" value="ENSRNOP00000077636.1"/>
    <property type="gene ID" value="ENSRNOG00000070472.1"/>
</dbReference>
<dbReference type="GeneID" id="500991"/>
<dbReference type="KEGG" id="rno:500991"/>
<dbReference type="AGR" id="RGD:1560781"/>
<dbReference type="CTD" id="54827"/>
<dbReference type="RGD" id="1560781">
    <property type="gene designation" value="Nxpe4"/>
</dbReference>
<dbReference type="GeneTree" id="ENSGT00950000182866"/>
<dbReference type="InParanoid" id="Q5XI89"/>
<dbReference type="OMA" id="IYIQWQR"/>
<dbReference type="PhylomeDB" id="Q5XI89"/>
<dbReference type="PRO" id="PR:Q5XI89"/>
<dbReference type="Proteomes" id="UP000002494">
    <property type="component" value="Chromosome 8"/>
</dbReference>
<dbReference type="GO" id="GO:0005576">
    <property type="term" value="C:extracellular region"/>
    <property type="evidence" value="ECO:0007669"/>
    <property type="project" value="UniProtKB-SubCell"/>
</dbReference>
<dbReference type="Gene3D" id="2.60.40.10">
    <property type="entry name" value="Immunoglobulins"/>
    <property type="match status" value="1"/>
</dbReference>
<dbReference type="InterPro" id="IPR013783">
    <property type="entry name" value="Ig-like_fold"/>
</dbReference>
<dbReference type="InterPro" id="IPR014756">
    <property type="entry name" value="Ig_E-set"/>
</dbReference>
<dbReference type="InterPro" id="IPR057106">
    <property type="entry name" value="NXPE4_C"/>
</dbReference>
<dbReference type="InterPro" id="IPR026845">
    <property type="entry name" value="NXPH/NXPE"/>
</dbReference>
<dbReference type="PANTHER" id="PTHR16165">
    <property type="entry name" value="NXPE FAMILY MEMBER"/>
    <property type="match status" value="1"/>
</dbReference>
<dbReference type="PANTHER" id="PTHR16165:SF27">
    <property type="entry name" value="NXPE FAMILY MEMBER 4"/>
    <property type="match status" value="1"/>
</dbReference>
<dbReference type="Pfam" id="PF06312">
    <property type="entry name" value="Neurexophilin"/>
    <property type="match status" value="1"/>
</dbReference>
<dbReference type="Pfam" id="PF24536">
    <property type="entry name" value="NXPE4_C"/>
    <property type="match status" value="1"/>
</dbReference>
<dbReference type="SUPFAM" id="SSF81296">
    <property type="entry name" value="E set domains"/>
    <property type="match status" value="1"/>
</dbReference>
<feature type="signal peptide" evidence="1">
    <location>
        <begin position="1"/>
        <end position="26"/>
    </location>
</feature>
<feature type="chain" id="PRO_0000019555" description="NXPE family member 4">
    <location>
        <begin position="27"/>
        <end position="542"/>
    </location>
</feature>
<feature type="glycosylation site" description="N-linked (GlcNAc...) asparagine" evidence="1">
    <location>
        <position position="91"/>
    </location>
</feature>
<feature type="glycosylation site" description="N-linked (GlcNAc...) asparagine" evidence="1">
    <location>
        <position position="92"/>
    </location>
</feature>
<feature type="glycosylation site" description="N-linked (GlcNAc...) asparagine" evidence="1">
    <location>
        <position position="159"/>
    </location>
</feature>
<feature type="glycosylation site" description="N-linked (GlcNAc...) asparagine" evidence="1">
    <location>
        <position position="223"/>
    </location>
</feature>
<accession>Q5XI89</accession>